<accession>A4XS59</accession>
<protein>
    <recommendedName>
        <fullName evidence="1">NH(3)-dependent NAD(+) synthetase</fullName>
        <ecNumber evidence="1">6.3.1.5</ecNumber>
    </recommendedName>
</protein>
<dbReference type="EC" id="6.3.1.5" evidence="1"/>
<dbReference type="EMBL" id="CP000680">
    <property type="protein sequence ID" value="ABP84175.1"/>
    <property type="molecule type" value="Genomic_DNA"/>
</dbReference>
<dbReference type="SMR" id="A4XS59"/>
<dbReference type="STRING" id="399739.Pmen_1410"/>
<dbReference type="KEGG" id="pmy:Pmen_1410"/>
<dbReference type="PATRIC" id="fig|399739.8.peg.1431"/>
<dbReference type="eggNOG" id="COG0171">
    <property type="taxonomic scope" value="Bacteria"/>
</dbReference>
<dbReference type="HOGENOM" id="CLU_059327_3_0_6"/>
<dbReference type="OrthoDB" id="3266517at2"/>
<dbReference type="UniPathway" id="UPA00253">
    <property type="reaction ID" value="UER00333"/>
</dbReference>
<dbReference type="GO" id="GO:0005737">
    <property type="term" value="C:cytoplasm"/>
    <property type="evidence" value="ECO:0007669"/>
    <property type="project" value="InterPro"/>
</dbReference>
<dbReference type="GO" id="GO:0005524">
    <property type="term" value="F:ATP binding"/>
    <property type="evidence" value="ECO:0007669"/>
    <property type="project" value="UniProtKB-UniRule"/>
</dbReference>
<dbReference type="GO" id="GO:0004359">
    <property type="term" value="F:glutaminase activity"/>
    <property type="evidence" value="ECO:0007669"/>
    <property type="project" value="InterPro"/>
</dbReference>
<dbReference type="GO" id="GO:0046872">
    <property type="term" value="F:metal ion binding"/>
    <property type="evidence" value="ECO:0007669"/>
    <property type="project" value="UniProtKB-KW"/>
</dbReference>
<dbReference type="GO" id="GO:0003952">
    <property type="term" value="F:NAD+ synthase (glutamine-hydrolyzing) activity"/>
    <property type="evidence" value="ECO:0007669"/>
    <property type="project" value="InterPro"/>
</dbReference>
<dbReference type="GO" id="GO:0008795">
    <property type="term" value="F:NAD+ synthase activity"/>
    <property type="evidence" value="ECO:0007669"/>
    <property type="project" value="UniProtKB-UniRule"/>
</dbReference>
<dbReference type="GO" id="GO:0009435">
    <property type="term" value="P:NAD biosynthetic process"/>
    <property type="evidence" value="ECO:0007669"/>
    <property type="project" value="UniProtKB-UniRule"/>
</dbReference>
<dbReference type="CDD" id="cd00553">
    <property type="entry name" value="NAD_synthase"/>
    <property type="match status" value="1"/>
</dbReference>
<dbReference type="Gene3D" id="3.40.50.620">
    <property type="entry name" value="HUPs"/>
    <property type="match status" value="1"/>
</dbReference>
<dbReference type="HAMAP" id="MF_00193">
    <property type="entry name" value="NadE_ammonia_dep"/>
    <property type="match status" value="1"/>
</dbReference>
<dbReference type="InterPro" id="IPR022310">
    <property type="entry name" value="NAD/GMP_synthase"/>
</dbReference>
<dbReference type="InterPro" id="IPR003694">
    <property type="entry name" value="NAD_synthase"/>
</dbReference>
<dbReference type="InterPro" id="IPR022926">
    <property type="entry name" value="NH(3)-dep_NAD(+)_synth"/>
</dbReference>
<dbReference type="InterPro" id="IPR014729">
    <property type="entry name" value="Rossmann-like_a/b/a_fold"/>
</dbReference>
<dbReference type="NCBIfam" id="TIGR00552">
    <property type="entry name" value="nadE"/>
    <property type="match status" value="1"/>
</dbReference>
<dbReference type="NCBIfam" id="NF001979">
    <property type="entry name" value="PRK00768.1"/>
    <property type="match status" value="1"/>
</dbReference>
<dbReference type="PANTHER" id="PTHR23090">
    <property type="entry name" value="NH 3 /GLUTAMINE-DEPENDENT NAD + SYNTHETASE"/>
    <property type="match status" value="1"/>
</dbReference>
<dbReference type="PANTHER" id="PTHR23090:SF7">
    <property type="entry name" value="NH(3)-DEPENDENT NAD(+) SYNTHETASE"/>
    <property type="match status" value="1"/>
</dbReference>
<dbReference type="Pfam" id="PF02540">
    <property type="entry name" value="NAD_synthase"/>
    <property type="match status" value="1"/>
</dbReference>
<dbReference type="SUPFAM" id="SSF52402">
    <property type="entry name" value="Adenine nucleotide alpha hydrolases-like"/>
    <property type="match status" value="1"/>
</dbReference>
<name>NADE_ECTM1</name>
<gene>
    <name evidence="1" type="primary">nadE</name>
    <name type="ordered locus">Pmen_1410</name>
</gene>
<keyword id="KW-0067">ATP-binding</keyword>
<keyword id="KW-0436">Ligase</keyword>
<keyword id="KW-0460">Magnesium</keyword>
<keyword id="KW-0479">Metal-binding</keyword>
<keyword id="KW-0520">NAD</keyword>
<keyword id="KW-0547">Nucleotide-binding</keyword>
<reference key="1">
    <citation type="submission" date="2007-04" db="EMBL/GenBank/DDBJ databases">
        <title>Complete sequence of Pseudomonas mendocina ymp.</title>
        <authorList>
            <consortium name="US DOE Joint Genome Institute"/>
            <person name="Copeland A."/>
            <person name="Lucas S."/>
            <person name="Lapidus A."/>
            <person name="Barry K."/>
            <person name="Glavina del Rio T."/>
            <person name="Dalin E."/>
            <person name="Tice H."/>
            <person name="Pitluck S."/>
            <person name="Kiss H."/>
            <person name="Brettin T."/>
            <person name="Detter J.C."/>
            <person name="Bruce D."/>
            <person name="Han C."/>
            <person name="Schmutz J."/>
            <person name="Larimer F."/>
            <person name="Land M."/>
            <person name="Hauser L."/>
            <person name="Kyrpides N."/>
            <person name="Mikhailova N."/>
            <person name="Hersman L."/>
            <person name="Dubois J."/>
            <person name="Maurice P."/>
            <person name="Richardson P."/>
        </authorList>
    </citation>
    <scope>NUCLEOTIDE SEQUENCE [LARGE SCALE GENOMIC DNA]</scope>
    <source>
        <strain>ymp</strain>
    </source>
</reference>
<evidence type="ECO:0000255" key="1">
    <source>
        <dbReference type="HAMAP-Rule" id="MF_00193"/>
    </source>
</evidence>
<sequence length="275" mass="29744">MSNRQAEIAAALDVVPPFADDAALVAEIERRKTFIKNTLKQSGLKVLVLGISGGVDSTTAGRLAQLSVEELRAETGDTDYRFIAVRLPHNTQHDEHDAQDSLKFVNADEEATVNIAASVIGLSEQVSHLQQLSDARRDFVIGNVKARIRMVAQFTIANANNGLVIGTDHAAEAVMGFFTKFGDGACDLAPLSGLVKHQVRAIAAHLGAPQHLVQKTPTADLEELRPGKPDEEAHGVTYAEIDAFLHGQNVSDEAYATIVRTYDATRHKRELPLVP</sequence>
<proteinExistence type="inferred from homology"/>
<feature type="chain" id="PRO_1000077585" description="NH(3)-dependent NAD(+) synthetase">
    <location>
        <begin position="1"/>
        <end position="275"/>
    </location>
</feature>
<feature type="binding site" evidence="1">
    <location>
        <begin position="50"/>
        <end position="57"/>
    </location>
    <ligand>
        <name>ATP</name>
        <dbReference type="ChEBI" id="CHEBI:30616"/>
    </ligand>
</feature>
<feature type="binding site" evidence="1">
    <location>
        <position position="56"/>
    </location>
    <ligand>
        <name>Mg(2+)</name>
        <dbReference type="ChEBI" id="CHEBI:18420"/>
    </ligand>
</feature>
<feature type="binding site" evidence="1">
    <location>
        <position position="147"/>
    </location>
    <ligand>
        <name>deamido-NAD(+)</name>
        <dbReference type="ChEBI" id="CHEBI:58437"/>
    </ligand>
</feature>
<feature type="binding site" evidence="1">
    <location>
        <position position="167"/>
    </location>
    <ligand>
        <name>ATP</name>
        <dbReference type="ChEBI" id="CHEBI:30616"/>
    </ligand>
</feature>
<feature type="binding site" evidence="1">
    <location>
        <position position="172"/>
    </location>
    <ligand>
        <name>Mg(2+)</name>
        <dbReference type="ChEBI" id="CHEBI:18420"/>
    </ligand>
</feature>
<feature type="binding site" evidence="1">
    <location>
        <position position="180"/>
    </location>
    <ligand>
        <name>deamido-NAD(+)</name>
        <dbReference type="ChEBI" id="CHEBI:58437"/>
    </ligand>
</feature>
<feature type="binding site" evidence="1">
    <location>
        <position position="187"/>
    </location>
    <ligand>
        <name>deamido-NAD(+)</name>
        <dbReference type="ChEBI" id="CHEBI:58437"/>
    </ligand>
</feature>
<feature type="binding site" evidence="1">
    <location>
        <position position="196"/>
    </location>
    <ligand>
        <name>ATP</name>
        <dbReference type="ChEBI" id="CHEBI:30616"/>
    </ligand>
</feature>
<feature type="binding site" evidence="1">
    <location>
        <position position="218"/>
    </location>
    <ligand>
        <name>ATP</name>
        <dbReference type="ChEBI" id="CHEBI:30616"/>
    </ligand>
</feature>
<feature type="binding site" evidence="1">
    <location>
        <begin position="267"/>
        <end position="268"/>
    </location>
    <ligand>
        <name>deamido-NAD(+)</name>
        <dbReference type="ChEBI" id="CHEBI:58437"/>
    </ligand>
</feature>
<comment type="function">
    <text evidence="1">Catalyzes the ATP-dependent amidation of deamido-NAD to form NAD. Uses ammonia as a nitrogen source.</text>
</comment>
<comment type="catalytic activity">
    <reaction evidence="1">
        <text>deamido-NAD(+) + NH4(+) + ATP = AMP + diphosphate + NAD(+) + H(+)</text>
        <dbReference type="Rhea" id="RHEA:21188"/>
        <dbReference type="ChEBI" id="CHEBI:15378"/>
        <dbReference type="ChEBI" id="CHEBI:28938"/>
        <dbReference type="ChEBI" id="CHEBI:30616"/>
        <dbReference type="ChEBI" id="CHEBI:33019"/>
        <dbReference type="ChEBI" id="CHEBI:57540"/>
        <dbReference type="ChEBI" id="CHEBI:58437"/>
        <dbReference type="ChEBI" id="CHEBI:456215"/>
        <dbReference type="EC" id="6.3.1.5"/>
    </reaction>
</comment>
<comment type="pathway">
    <text evidence="1">Cofactor biosynthesis; NAD(+) biosynthesis; NAD(+) from deamido-NAD(+) (ammonia route): step 1/1.</text>
</comment>
<comment type="subunit">
    <text evidence="1">Homodimer.</text>
</comment>
<comment type="similarity">
    <text evidence="1">Belongs to the NAD synthetase family.</text>
</comment>
<organism>
    <name type="scientific">Ectopseudomonas mendocina (strain ymp)</name>
    <name type="common">Pseudomonas mendocina</name>
    <dbReference type="NCBI Taxonomy" id="399739"/>
    <lineage>
        <taxon>Bacteria</taxon>
        <taxon>Pseudomonadati</taxon>
        <taxon>Pseudomonadota</taxon>
        <taxon>Gammaproteobacteria</taxon>
        <taxon>Pseudomonadales</taxon>
        <taxon>Pseudomonadaceae</taxon>
        <taxon>Ectopseudomonas</taxon>
    </lineage>
</organism>